<proteinExistence type="inferred from homology"/>
<keyword id="KW-0378">Hydrolase</keyword>
<keyword id="KW-0460">Magnesium</keyword>
<keyword id="KW-1185">Reference proteome</keyword>
<organism>
    <name type="scientific">Shigella flexneri</name>
    <dbReference type="NCBI Taxonomy" id="623"/>
    <lineage>
        <taxon>Bacteria</taxon>
        <taxon>Pseudomonadati</taxon>
        <taxon>Pseudomonadota</taxon>
        <taxon>Gammaproteobacteria</taxon>
        <taxon>Enterobacterales</taxon>
        <taxon>Enterobacteriaceae</taxon>
        <taxon>Shigella</taxon>
    </lineage>
</organism>
<sequence length="505" mass="59313">MAQIDFRKKINWHRRYRSPQGVKTEHEILRIFESDRGRIINSPAIRRLQQKTQVFPLERNAAVRTRLTHSMEVQQVGRYIAKEILSRLKELKLLEAYGLDELTGPFESIVEMSCLMHDIGNPPFGHFGEAAINDWFRQRLHPEDAESQPLTDDRCSVAALRLRDGEEPLNELRRKIRQDLCHFEGNAQGIRLVHTLMRMNLTWAQVGGILKYTRPAWWRGETPETHHYLMKKPGYYLSEEAYIARLRKELNLALYSRFPLTWIMEAADDISYCVADLEDAVEKRIFTVEQLYHHLHEAWGQHEKGSLFSLVVENAWEKSRSNSLSRSTEDQFFMYLRVNTLNKLVPYAAQRFIDNLPAIFAGTFNHALLEDASECSDLLKLYKNVAVKHVFSHPDVEQLELQGYRVISGLLEIYRPLLSLSLSDFTELVEKERVKRFPIESRLFHKLSTRHRLAYVEAGSKLPSDSPEFPLWEYYYRCRLLQDYISGMTDLYAWDEYRRLMAVEQ</sequence>
<reference key="1">
    <citation type="journal article" date="2002" name="Nucleic Acids Res.">
        <title>Genome sequence of Shigella flexneri 2a: insights into pathogenicity through comparison with genomes of Escherichia coli K12 and O157.</title>
        <authorList>
            <person name="Jin Q."/>
            <person name="Yuan Z."/>
            <person name="Xu J."/>
            <person name="Wang Y."/>
            <person name="Shen Y."/>
            <person name="Lu W."/>
            <person name="Wang J."/>
            <person name="Liu H."/>
            <person name="Yang J."/>
            <person name="Yang F."/>
            <person name="Zhang X."/>
            <person name="Zhang J."/>
            <person name="Yang G."/>
            <person name="Wu H."/>
            <person name="Qu D."/>
            <person name="Dong J."/>
            <person name="Sun L."/>
            <person name="Xue Y."/>
            <person name="Zhao A."/>
            <person name="Gao Y."/>
            <person name="Zhu J."/>
            <person name="Kan B."/>
            <person name="Ding K."/>
            <person name="Chen S."/>
            <person name="Cheng H."/>
            <person name="Yao Z."/>
            <person name="He B."/>
            <person name="Chen R."/>
            <person name="Ma D."/>
            <person name="Qiang B."/>
            <person name="Wen Y."/>
            <person name="Hou Y."/>
            <person name="Yu J."/>
        </authorList>
    </citation>
    <scope>NUCLEOTIDE SEQUENCE [LARGE SCALE GENOMIC DNA]</scope>
    <source>
        <strain>301 / Serotype 2a</strain>
    </source>
</reference>
<reference key="2">
    <citation type="journal article" date="2003" name="Infect. Immun.">
        <title>Complete genome sequence and comparative genomics of Shigella flexneri serotype 2a strain 2457T.</title>
        <authorList>
            <person name="Wei J."/>
            <person name="Goldberg M.B."/>
            <person name="Burland V."/>
            <person name="Venkatesan M.M."/>
            <person name="Deng W."/>
            <person name="Fournier G."/>
            <person name="Mayhew G.F."/>
            <person name="Plunkett G. III"/>
            <person name="Rose D.J."/>
            <person name="Darling A."/>
            <person name="Mau B."/>
            <person name="Perna N.T."/>
            <person name="Payne S.M."/>
            <person name="Runyen-Janecky L.J."/>
            <person name="Zhou S."/>
            <person name="Schwartz D.C."/>
            <person name="Blattner F.R."/>
        </authorList>
    </citation>
    <scope>NUCLEOTIDE SEQUENCE [LARGE SCALE GENOMIC DNA]</scope>
    <source>
        <strain>ATCC 700930 / 2457T / Serotype 2a</strain>
    </source>
</reference>
<name>DGTP_SHIFL</name>
<protein>
    <recommendedName>
        <fullName evidence="2">Deoxyguanosinetriphosphate triphosphohydrolase</fullName>
        <shortName evidence="2">dGTP triphosphohydrolase</shortName>
        <shortName evidence="2">dGTPase</shortName>
        <ecNumber evidence="2">3.1.5.1</ecNumber>
    </recommendedName>
</protein>
<accession>Q83MD6</accession>
<accession>Q7UDR0</accession>
<dbReference type="EC" id="3.1.5.1" evidence="2"/>
<dbReference type="EMBL" id="AE005674">
    <property type="protein sequence ID" value="AAN41815.1"/>
    <property type="status" value="ALT_FRAME"/>
    <property type="molecule type" value="Genomic_DNA"/>
</dbReference>
<dbReference type="EMBL" id="AE014073">
    <property type="protein sequence ID" value="AAP15696.1"/>
    <property type="molecule type" value="Genomic_DNA"/>
</dbReference>
<dbReference type="SMR" id="Q83MD6"/>
<dbReference type="STRING" id="198214.SF0152"/>
<dbReference type="PaxDb" id="198214-SF0152"/>
<dbReference type="KEGG" id="sfx:S0155"/>
<dbReference type="HOGENOM" id="CLU_028163_2_1_6"/>
<dbReference type="Proteomes" id="UP000001006">
    <property type="component" value="Chromosome"/>
</dbReference>
<dbReference type="Proteomes" id="UP000002673">
    <property type="component" value="Chromosome"/>
</dbReference>
<dbReference type="GO" id="GO:0008832">
    <property type="term" value="F:dGTPase activity"/>
    <property type="evidence" value="ECO:0007669"/>
    <property type="project" value="UniProtKB-UniRule"/>
</dbReference>
<dbReference type="GO" id="GO:0000287">
    <property type="term" value="F:magnesium ion binding"/>
    <property type="evidence" value="ECO:0007669"/>
    <property type="project" value="UniProtKB-UniRule"/>
</dbReference>
<dbReference type="GO" id="GO:0006203">
    <property type="term" value="P:dGTP catabolic process"/>
    <property type="evidence" value="ECO:0007669"/>
    <property type="project" value="InterPro"/>
</dbReference>
<dbReference type="CDD" id="cd00077">
    <property type="entry name" value="HDc"/>
    <property type="match status" value="1"/>
</dbReference>
<dbReference type="FunFam" id="1.10.3210.10:FF:000009">
    <property type="entry name" value="Deoxyguanosinetriphosphate triphosphohydrolase"/>
    <property type="match status" value="1"/>
</dbReference>
<dbReference type="FunFam" id="1.10.3210.10:FF:000010">
    <property type="entry name" value="Deoxyguanosinetriphosphate triphosphohydrolase"/>
    <property type="match status" value="1"/>
</dbReference>
<dbReference type="FunFam" id="1.10.3410.10:FF:000001">
    <property type="entry name" value="Deoxyguanosinetriphosphate triphosphohydrolase"/>
    <property type="match status" value="1"/>
</dbReference>
<dbReference type="Gene3D" id="1.10.3210.10">
    <property type="entry name" value="Hypothetical protein af1432"/>
    <property type="match status" value="2"/>
</dbReference>
<dbReference type="Gene3D" id="1.10.3410.10">
    <property type="entry name" value="putative deoxyguanosinetriphosphate triphosphohydrolase like domain"/>
    <property type="match status" value="1"/>
</dbReference>
<dbReference type="HAMAP" id="MF_00030">
    <property type="entry name" value="dGTPase_type1"/>
    <property type="match status" value="1"/>
</dbReference>
<dbReference type="InterPro" id="IPR023293">
    <property type="entry name" value="dGTP_triP_hydro_central_sf"/>
</dbReference>
<dbReference type="InterPro" id="IPR006261">
    <property type="entry name" value="dGTPase"/>
</dbReference>
<dbReference type="InterPro" id="IPR050135">
    <property type="entry name" value="dGTPase-like"/>
</dbReference>
<dbReference type="InterPro" id="IPR020779">
    <property type="entry name" value="dNTPase_1"/>
</dbReference>
<dbReference type="InterPro" id="IPR003607">
    <property type="entry name" value="HD/PDEase_dom"/>
</dbReference>
<dbReference type="InterPro" id="IPR006674">
    <property type="entry name" value="HD_domain"/>
</dbReference>
<dbReference type="NCBIfam" id="TIGR01353">
    <property type="entry name" value="dGTP_triPase"/>
    <property type="match status" value="1"/>
</dbReference>
<dbReference type="NCBIfam" id="NF003429">
    <property type="entry name" value="PRK04926.1"/>
    <property type="match status" value="1"/>
</dbReference>
<dbReference type="PANTHER" id="PTHR11373:SF32">
    <property type="entry name" value="DEOXYGUANOSINETRIPHOSPHATE TRIPHOSPHOHYDROLASE"/>
    <property type="match status" value="1"/>
</dbReference>
<dbReference type="PANTHER" id="PTHR11373">
    <property type="entry name" value="DEOXYNUCLEOSIDE TRIPHOSPHATE TRIPHOSPHOHYDROLASE"/>
    <property type="match status" value="1"/>
</dbReference>
<dbReference type="Pfam" id="PF01966">
    <property type="entry name" value="HD"/>
    <property type="match status" value="1"/>
</dbReference>
<dbReference type="SMART" id="SM00471">
    <property type="entry name" value="HDc"/>
    <property type="match status" value="1"/>
</dbReference>
<dbReference type="SUPFAM" id="SSF109604">
    <property type="entry name" value="HD-domain/PDEase-like"/>
    <property type="match status" value="1"/>
</dbReference>
<dbReference type="PROSITE" id="PS51831">
    <property type="entry name" value="HD"/>
    <property type="match status" value="1"/>
</dbReference>
<gene>
    <name evidence="2" type="primary">dgt</name>
    <name type="ordered locus">SF0152</name>
    <name type="ordered locus">S0155</name>
</gene>
<feature type="initiator methionine" description="Removed" evidence="1">
    <location>
        <position position="1"/>
    </location>
</feature>
<feature type="chain" id="PRO_0000205287" description="Deoxyguanosinetriphosphate triphosphohydrolase">
    <location>
        <begin position="2"/>
        <end position="505"/>
    </location>
</feature>
<feature type="domain" description="HD" evidence="3">
    <location>
        <begin position="66"/>
        <end position="273"/>
    </location>
</feature>
<feature type="sequence conflict" description="In Ref. 2; AAP15696." evidence="4" ref="2">
    <original>G</original>
    <variation>V</variation>
    <location>
        <position position="459"/>
    </location>
</feature>
<comment type="function">
    <text evidence="2">dGTPase preferentially hydrolyzes dGTP over the other canonical NTPs.</text>
</comment>
<comment type="catalytic activity">
    <reaction evidence="2">
        <text>dGTP + H2O = 2'-deoxyguanosine + triphosphate + H(+)</text>
        <dbReference type="Rhea" id="RHEA:15193"/>
        <dbReference type="ChEBI" id="CHEBI:15377"/>
        <dbReference type="ChEBI" id="CHEBI:15378"/>
        <dbReference type="ChEBI" id="CHEBI:17172"/>
        <dbReference type="ChEBI" id="CHEBI:18036"/>
        <dbReference type="ChEBI" id="CHEBI:61429"/>
        <dbReference type="EC" id="3.1.5.1"/>
    </reaction>
</comment>
<comment type="cofactor">
    <cofactor evidence="2">
        <name>Mg(2+)</name>
        <dbReference type="ChEBI" id="CHEBI:18420"/>
    </cofactor>
</comment>
<comment type="subunit">
    <text evidence="2">Homotetramer.</text>
</comment>
<comment type="similarity">
    <text evidence="2">Belongs to the dGTPase family. Type 1 subfamily.</text>
</comment>
<comment type="sequence caution" evidence="4">
    <conflict type="frameshift">
        <sequence resource="EMBL-CDS" id="AAN41815"/>
    </conflict>
</comment>
<evidence type="ECO:0000250" key="1"/>
<evidence type="ECO:0000255" key="2">
    <source>
        <dbReference type="HAMAP-Rule" id="MF_00030"/>
    </source>
</evidence>
<evidence type="ECO:0000255" key="3">
    <source>
        <dbReference type="PROSITE-ProRule" id="PRU01175"/>
    </source>
</evidence>
<evidence type="ECO:0000305" key="4"/>